<keyword id="KW-0106">Calcium</keyword>
<keyword id="KW-0186">Copper</keyword>
<keyword id="KW-0249">Electron transport</keyword>
<keyword id="KW-0349">Heme</keyword>
<keyword id="KW-0408">Iron</keyword>
<keyword id="KW-0460">Magnesium</keyword>
<keyword id="KW-0472">Membrane</keyword>
<keyword id="KW-0479">Metal-binding</keyword>
<keyword id="KW-0496">Mitochondrion</keyword>
<keyword id="KW-0999">Mitochondrion inner membrane</keyword>
<keyword id="KW-0679">Respiratory chain</keyword>
<keyword id="KW-0915">Sodium</keyword>
<keyword id="KW-1278">Translocase</keyword>
<keyword id="KW-0812">Transmembrane</keyword>
<keyword id="KW-1133">Transmembrane helix</keyword>
<keyword id="KW-0813">Transport</keyword>
<organism>
    <name type="scientific">Symphalangus syndactylus</name>
    <name type="common">Siamang</name>
    <name type="synonym">Hylobates syndactylus</name>
    <dbReference type="NCBI Taxonomy" id="9590"/>
    <lineage>
        <taxon>Eukaryota</taxon>
        <taxon>Metazoa</taxon>
        <taxon>Chordata</taxon>
        <taxon>Craniata</taxon>
        <taxon>Vertebrata</taxon>
        <taxon>Euteleostomi</taxon>
        <taxon>Mammalia</taxon>
        <taxon>Eutheria</taxon>
        <taxon>Euarchontoglires</taxon>
        <taxon>Primates</taxon>
        <taxon>Haplorrhini</taxon>
        <taxon>Catarrhini</taxon>
        <taxon>Hylobatidae</taxon>
        <taxon>Symphalangus</taxon>
    </lineage>
</organism>
<comment type="function">
    <text evidence="3">Component of the cytochrome c oxidase, the last enzyme in the mitochondrial electron transport chain which drives oxidative phosphorylation. The respiratory chain contains 3 multisubunit complexes succinate dehydrogenase (complex II, CII), ubiquinol-cytochrome c oxidoreductase (cytochrome b-c1 complex, complex III, CIII) and cytochrome c oxidase (complex IV, CIV), that cooperate to transfer electrons derived from NADH and succinate to molecular oxygen, creating an electrochemical gradient over the inner membrane that drives transmembrane transport and the ATP synthase. Cytochrome c oxidase is the component of the respiratory chain that catalyzes the reduction of oxygen to water. Electrons originating from reduced cytochrome c in the intermembrane space (IMS) are transferred via the dinuclear copper A center (CU(A)) of subunit 2 and heme A of subunit 1 to the active site in subunit 1, a binuclear center (BNC) formed by heme A3 and copper B (CU(B)). The BNC reduces molecular oxygen to 2 water molecules using 4 electrons from cytochrome c in the IMS and 4 protons from the mitochondrial matrix.</text>
</comment>
<comment type="catalytic activity">
    <reaction evidence="3">
        <text>4 Fe(II)-[cytochrome c] + O2 + 8 H(+)(in) = 4 Fe(III)-[cytochrome c] + 2 H2O + 4 H(+)(out)</text>
        <dbReference type="Rhea" id="RHEA:11436"/>
        <dbReference type="Rhea" id="RHEA-COMP:10350"/>
        <dbReference type="Rhea" id="RHEA-COMP:14399"/>
        <dbReference type="ChEBI" id="CHEBI:15377"/>
        <dbReference type="ChEBI" id="CHEBI:15378"/>
        <dbReference type="ChEBI" id="CHEBI:15379"/>
        <dbReference type="ChEBI" id="CHEBI:29033"/>
        <dbReference type="ChEBI" id="CHEBI:29034"/>
        <dbReference type="EC" id="7.1.1.9"/>
    </reaction>
    <physiologicalReaction direction="left-to-right" evidence="3">
        <dbReference type="Rhea" id="RHEA:11437"/>
    </physiologicalReaction>
</comment>
<comment type="cofactor">
    <cofactor evidence="2">
        <name>heme</name>
        <dbReference type="ChEBI" id="CHEBI:30413"/>
    </cofactor>
    <text evidence="2">Binds 2 heme A groups non-covalently per subunit.</text>
</comment>
<comment type="cofactor">
    <cofactor evidence="2">
        <name>Cu cation</name>
        <dbReference type="ChEBI" id="CHEBI:23378"/>
    </cofactor>
    <text evidence="2">Binds a copper B center.</text>
</comment>
<comment type="pathway">
    <text evidence="3">Energy metabolism; oxidative phosphorylation.</text>
</comment>
<comment type="subunit">
    <text evidence="1 2">Component of the cytochrome c oxidase (complex IV, CIV), a multisubunit enzyme composed of 14 subunits. The complex is composed of a catalytic core of 3 subunits MT-CO1, MT-CO2 and MT-CO3, encoded in the mitochondrial DNA, and 11 supernumerary subunits COX4I, COX5A, COX5B, COX6A, COX6B, COX6C, COX7A, COX7B, COX7C, COX8 and NDUFA4, which are encoded in the nuclear genome. The complex exists as a monomer or a dimer and forms supercomplexes (SCs) in the inner mitochondrial membrane with NADH-ubiquinone oxidoreductase (complex I, CI) and ubiquinol-cytochrome c oxidoreductase (cytochrome b-c1 complex, complex III, CIII), resulting in different assemblies (supercomplex SCI(1)III(2)IV(1) and megacomplex MCI(2)III(2)IV(2)) (By similarity). As a newly synthesized protein, rapidly incorporates into a multi-subunit assembly intermediate in the inner membrane, called MITRAC (mitochondrial translation regulation assembly intermediate of cytochrome c oxidase) complex, whose core components are COA3/MITRAC12 and COX14. Within the MITRAC complex, interacts with COA3 and with SMIM20/MITRAC7; the interaction with SMIM20 stabilizes the newly synthesized MT-CO1 and prevents its premature turnover. Interacts with TMEM177 in a COX20-dependent manner (By similarity).</text>
</comment>
<comment type="subcellular location">
    <subcellularLocation>
        <location evidence="2">Mitochondrion inner membrane</location>
        <topology evidence="2">Multi-pass membrane protein</topology>
    </subcellularLocation>
</comment>
<comment type="similarity">
    <text evidence="4">Belongs to the heme-copper respiratory oxidase family.</text>
</comment>
<sequence>MFADRWLFSTNHKDIGTLYLLFGAWAGVLGTALSLLIRAELGQPGNLLGNDHIYNVIVTAHAFVMIFFMVMPIMIGGFGNWLVPLMIGAPDMAFPRMNNMSFWLLPPSFLLLLASAMVEAGAGTGWTVYPPLAGNYSHPGASVDLTIFSLHLAGVSSILGAINFITTIINMKPPAMSQYQTPLFVWSVLITAVLLLLSLPVLAAGITMLLTDRNLNTTFFDPAGGGDPILYQHLFWFFGHPEVYILILPGFGMISHIVTHYSGKKEPFGYMGMVWAMMSIGFLGFIVWAHHMFTVGMDVDTRAYFTSATMIIAIPTGVKVFSWLATLHGSDTKWSAAVLWALGFIFLFTVGGLTGIVLANSSLDIVLHDTYYVVAHFHYVLSMGAVFAIMGGFVHWFPLFSGYTLDQTYAKIHFAIMFVGVNLTFFPQHFLGLSGMPRRYSDYPDAYTTWNILSSVGSFISLTAVMLMIFMIWEAFASKRKILMIEQPSTNLEWLYGCPPPYHTFEEPVYMKP</sequence>
<proteinExistence type="inferred from homology"/>
<reference key="1">
    <citation type="journal article" date="1992" name="J. Mol. Evol.">
        <title>Man's place in Hominoidea revealed by mitochondrial DNA genealogy.</title>
        <authorList>
            <person name="Horai S."/>
            <person name="Satta Y."/>
            <person name="Hayasaka K."/>
            <person name="Kondo R."/>
            <person name="Inoue T."/>
            <person name="Ishida T."/>
            <person name="Hayashi S."/>
            <person name="Takahata N."/>
        </authorList>
    </citation>
    <scope>NUCLEOTIDE SEQUENCE [GENOMIC DNA]</scope>
</reference>
<gene>
    <name type="primary">MT-CO1</name>
    <name type="synonym">COI</name>
    <name type="synonym">COXI</name>
    <name type="synonym">MTCO1</name>
</gene>
<accession>Q34800</accession>
<protein>
    <recommendedName>
        <fullName>Cytochrome c oxidase subunit 1</fullName>
        <ecNumber>7.1.1.9</ecNumber>
    </recommendedName>
    <alternativeName>
        <fullName>Cytochrome c oxidase polypeptide I</fullName>
    </alternativeName>
</protein>
<feature type="chain" id="PRO_0000183347" description="Cytochrome c oxidase subunit 1">
    <location>
        <begin position="1"/>
        <end position="513"/>
    </location>
</feature>
<feature type="topological domain" description="Mitochondrial matrix" evidence="2">
    <location>
        <begin position="1"/>
        <end position="11"/>
    </location>
</feature>
<feature type="transmembrane region" description="Helical; Name=I" evidence="2">
    <location>
        <begin position="12"/>
        <end position="40"/>
    </location>
</feature>
<feature type="topological domain" description="Mitochondrial intermembrane" evidence="2">
    <location>
        <begin position="41"/>
        <end position="50"/>
    </location>
</feature>
<feature type="transmembrane region" description="Helical; Name=II" evidence="2">
    <location>
        <begin position="51"/>
        <end position="86"/>
    </location>
</feature>
<feature type="topological domain" description="Mitochondrial matrix" evidence="2">
    <location>
        <begin position="87"/>
        <end position="94"/>
    </location>
</feature>
<feature type="transmembrane region" description="Helical; Name=III" evidence="2">
    <location>
        <begin position="95"/>
        <end position="117"/>
    </location>
</feature>
<feature type="topological domain" description="Mitochondrial intermembrane" evidence="2">
    <location>
        <begin position="118"/>
        <end position="140"/>
    </location>
</feature>
<feature type="transmembrane region" description="Helical; Name=IV" evidence="2">
    <location>
        <begin position="141"/>
        <end position="170"/>
    </location>
</feature>
<feature type="topological domain" description="Mitochondrial matrix" evidence="2">
    <location>
        <begin position="171"/>
        <end position="182"/>
    </location>
</feature>
<feature type="transmembrane region" description="Helical; Name=V" evidence="2">
    <location>
        <begin position="183"/>
        <end position="212"/>
    </location>
</feature>
<feature type="topological domain" description="Mitochondrial intermembrane" evidence="2">
    <location>
        <begin position="213"/>
        <end position="227"/>
    </location>
</feature>
<feature type="transmembrane region" description="Helical; Name=VI" evidence="2">
    <location>
        <begin position="228"/>
        <end position="261"/>
    </location>
</feature>
<feature type="topological domain" description="Mitochondrial matrix" evidence="2">
    <location>
        <begin position="262"/>
        <end position="269"/>
    </location>
</feature>
<feature type="transmembrane region" description="Helical; Name=VII" evidence="2">
    <location>
        <begin position="270"/>
        <end position="286"/>
    </location>
</feature>
<feature type="topological domain" description="Mitochondrial intermembrane" evidence="2">
    <location>
        <begin position="287"/>
        <end position="298"/>
    </location>
</feature>
<feature type="transmembrane region" description="Helical; Name=VIII" evidence="2">
    <location>
        <begin position="299"/>
        <end position="327"/>
    </location>
</feature>
<feature type="topological domain" description="Mitochondrial matrix" evidence="2">
    <location>
        <begin position="328"/>
        <end position="335"/>
    </location>
</feature>
<feature type="transmembrane region" description="Helical; Name=IX" evidence="2">
    <location>
        <begin position="336"/>
        <end position="357"/>
    </location>
</feature>
<feature type="topological domain" description="Mitochondrial intermembrane" evidence="2">
    <location>
        <begin position="358"/>
        <end position="370"/>
    </location>
</feature>
<feature type="transmembrane region" description="Helical; Name=X" evidence="2">
    <location>
        <begin position="371"/>
        <end position="400"/>
    </location>
</feature>
<feature type="topological domain" description="Mitochondrial matrix" evidence="2">
    <location>
        <begin position="401"/>
        <end position="406"/>
    </location>
</feature>
<feature type="transmembrane region" description="Helical; Name=XI" evidence="2">
    <location>
        <begin position="407"/>
        <end position="433"/>
    </location>
</feature>
<feature type="topological domain" description="Mitochondrial intermembrane" evidence="2">
    <location>
        <begin position="434"/>
        <end position="446"/>
    </location>
</feature>
<feature type="transmembrane region" description="Helical; Name=XII" evidence="2">
    <location>
        <begin position="447"/>
        <end position="478"/>
    </location>
</feature>
<feature type="topological domain" description="Mitochondrial matrix" evidence="2">
    <location>
        <begin position="479"/>
        <end position="513"/>
    </location>
</feature>
<feature type="binding site" evidence="2">
    <location>
        <position position="40"/>
    </location>
    <ligand>
        <name>Na(+)</name>
        <dbReference type="ChEBI" id="CHEBI:29101"/>
    </ligand>
</feature>
<feature type="binding site" evidence="2">
    <location>
        <position position="45"/>
    </location>
    <ligand>
        <name>Na(+)</name>
        <dbReference type="ChEBI" id="CHEBI:29101"/>
    </ligand>
</feature>
<feature type="binding site" description="axial binding residue" evidence="2">
    <location>
        <position position="61"/>
    </location>
    <ligand>
        <name>Fe(II)-heme a</name>
        <dbReference type="ChEBI" id="CHEBI:61715"/>
        <note>low-spin</note>
    </ligand>
    <ligandPart>
        <name>Fe</name>
        <dbReference type="ChEBI" id="CHEBI:18248"/>
    </ligandPart>
</feature>
<feature type="binding site" evidence="2">
    <location>
        <position position="240"/>
    </location>
    <ligand>
        <name>Cu cation</name>
        <dbReference type="ChEBI" id="CHEBI:23378"/>
        <label>B</label>
    </ligand>
</feature>
<feature type="binding site" evidence="2">
    <location>
        <position position="244"/>
    </location>
    <ligand>
        <name>O2</name>
        <dbReference type="ChEBI" id="CHEBI:15379"/>
    </ligand>
</feature>
<feature type="binding site" evidence="2">
    <location>
        <position position="290"/>
    </location>
    <ligand>
        <name>Cu cation</name>
        <dbReference type="ChEBI" id="CHEBI:23378"/>
        <label>B</label>
    </ligand>
</feature>
<feature type="binding site" evidence="2">
    <location>
        <position position="291"/>
    </location>
    <ligand>
        <name>Cu cation</name>
        <dbReference type="ChEBI" id="CHEBI:23378"/>
        <label>B</label>
    </ligand>
</feature>
<feature type="binding site" evidence="2">
    <location>
        <position position="368"/>
    </location>
    <ligand>
        <name>Mg(2+)</name>
        <dbReference type="ChEBI" id="CHEBI:18420"/>
        <note>ligand shared with MT-CO2</note>
    </ligand>
</feature>
<feature type="binding site" evidence="2">
    <location>
        <position position="369"/>
    </location>
    <ligand>
        <name>Mg(2+)</name>
        <dbReference type="ChEBI" id="CHEBI:18420"/>
        <note>ligand shared with MT-CO2</note>
    </ligand>
</feature>
<feature type="binding site" description="axial binding residue" evidence="2">
    <location>
        <position position="376"/>
    </location>
    <ligand>
        <name>heme a3</name>
        <dbReference type="ChEBI" id="CHEBI:83282"/>
        <note>high-spin</note>
    </ligand>
    <ligandPart>
        <name>Fe</name>
        <dbReference type="ChEBI" id="CHEBI:18248"/>
    </ligandPart>
</feature>
<feature type="binding site" description="axial binding residue" evidence="2">
    <location>
        <position position="378"/>
    </location>
    <ligand>
        <name>Fe(II)-heme a</name>
        <dbReference type="ChEBI" id="CHEBI:61715"/>
        <note>low-spin</note>
    </ligand>
    <ligandPart>
        <name>Fe</name>
        <dbReference type="ChEBI" id="CHEBI:18248"/>
    </ligandPart>
</feature>
<feature type="binding site" evidence="2">
    <location>
        <position position="441"/>
    </location>
    <ligand>
        <name>Na(+)</name>
        <dbReference type="ChEBI" id="CHEBI:29101"/>
    </ligand>
</feature>
<feature type="cross-link" description="1'-histidyl-3'-tyrosine (His-Tyr)" evidence="2">
    <location>
        <begin position="240"/>
        <end position="244"/>
    </location>
</feature>
<geneLocation type="mitochondrion"/>
<evidence type="ECO:0000250" key="1">
    <source>
        <dbReference type="UniProtKB" id="P00395"/>
    </source>
</evidence>
<evidence type="ECO:0000250" key="2">
    <source>
        <dbReference type="UniProtKB" id="P00396"/>
    </source>
</evidence>
<evidence type="ECO:0000250" key="3">
    <source>
        <dbReference type="UniProtKB" id="P00401"/>
    </source>
</evidence>
<evidence type="ECO:0000305" key="4"/>
<dbReference type="EC" id="7.1.1.9"/>
<dbReference type="EMBL" id="D38484">
    <property type="protein sequence ID" value="BAA07496.1"/>
    <property type="molecule type" value="Genomic_DNA"/>
</dbReference>
<dbReference type="PIR" id="I37049">
    <property type="entry name" value="I37049"/>
</dbReference>
<dbReference type="PIR" id="T11835">
    <property type="entry name" value="T11835"/>
</dbReference>
<dbReference type="RefSeq" id="YP_003587307.1">
    <property type="nucleotide sequence ID" value="NC_014047.1"/>
</dbReference>
<dbReference type="SMR" id="Q34800"/>
<dbReference type="GeneID" id="9072796"/>
<dbReference type="KEGG" id="ssyn:9072796"/>
<dbReference type="CTD" id="4512"/>
<dbReference type="UniPathway" id="UPA00705"/>
<dbReference type="GO" id="GO:0005743">
    <property type="term" value="C:mitochondrial inner membrane"/>
    <property type="evidence" value="ECO:0007669"/>
    <property type="project" value="UniProtKB-SubCell"/>
</dbReference>
<dbReference type="GO" id="GO:0045277">
    <property type="term" value="C:respiratory chain complex IV"/>
    <property type="evidence" value="ECO:0000250"/>
    <property type="project" value="UniProtKB"/>
</dbReference>
<dbReference type="GO" id="GO:0004129">
    <property type="term" value="F:cytochrome-c oxidase activity"/>
    <property type="evidence" value="ECO:0007669"/>
    <property type="project" value="UniProtKB-EC"/>
</dbReference>
<dbReference type="GO" id="GO:0020037">
    <property type="term" value="F:heme binding"/>
    <property type="evidence" value="ECO:0007669"/>
    <property type="project" value="InterPro"/>
</dbReference>
<dbReference type="GO" id="GO:0046872">
    <property type="term" value="F:metal ion binding"/>
    <property type="evidence" value="ECO:0007669"/>
    <property type="project" value="UniProtKB-KW"/>
</dbReference>
<dbReference type="GO" id="GO:0015990">
    <property type="term" value="P:electron transport coupled proton transport"/>
    <property type="evidence" value="ECO:0007669"/>
    <property type="project" value="TreeGrafter"/>
</dbReference>
<dbReference type="GO" id="GO:0006123">
    <property type="term" value="P:mitochondrial electron transport, cytochrome c to oxygen"/>
    <property type="evidence" value="ECO:0007669"/>
    <property type="project" value="TreeGrafter"/>
</dbReference>
<dbReference type="CDD" id="cd01663">
    <property type="entry name" value="Cyt_c_Oxidase_I"/>
    <property type="match status" value="1"/>
</dbReference>
<dbReference type="FunFam" id="1.20.210.10:FF:000001">
    <property type="entry name" value="Cytochrome c oxidase subunit 1"/>
    <property type="match status" value="1"/>
</dbReference>
<dbReference type="Gene3D" id="1.20.210.10">
    <property type="entry name" value="Cytochrome c oxidase-like, subunit I domain"/>
    <property type="match status" value="1"/>
</dbReference>
<dbReference type="InterPro" id="IPR023616">
    <property type="entry name" value="Cyt_c_oxase-like_su1_dom"/>
</dbReference>
<dbReference type="InterPro" id="IPR036927">
    <property type="entry name" value="Cyt_c_oxase-like_su1_sf"/>
</dbReference>
<dbReference type="InterPro" id="IPR000883">
    <property type="entry name" value="Cyt_C_Oxase_1"/>
</dbReference>
<dbReference type="InterPro" id="IPR023615">
    <property type="entry name" value="Cyt_c_Oxase_su1_BS"/>
</dbReference>
<dbReference type="InterPro" id="IPR033944">
    <property type="entry name" value="Cyt_c_oxase_su1_dom"/>
</dbReference>
<dbReference type="PANTHER" id="PTHR10422">
    <property type="entry name" value="CYTOCHROME C OXIDASE SUBUNIT 1"/>
    <property type="match status" value="1"/>
</dbReference>
<dbReference type="PANTHER" id="PTHR10422:SF18">
    <property type="entry name" value="CYTOCHROME C OXIDASE SUBUNIT 1"/>
    <property type="match status" value="1"/>
</dbReference>
<dbReference type="Pfam" id="PF00115">
    <property type="entry name" value="COX1"/>
    <property type="match status" value="1"/>
</dbReference>
<dbReference type="PRINTS" id="PR01165">
    <property type="entry name" value="CYCOXIDASEI"/>
</dbReference>
<dbReference type="SUPFAM" id="SSF81442">
    <property type="entry name" value="Cytochrome c oxidase subunit I-like"/>
    <property type="match status" value="1"/>
</dbReference>
<dbReference type="PROSITE" id="PS50855">
    <property type="entry name" value="COX1"/>
    <property type="match status" value="1"/>
</dbReference>
<dbReference type="PROSITE" id="PS00077">
    <property type="entry name" value="COX1_CUB"/>
    <property type="match status" value="1"/>
</dbReference>
<name>COX1_SYMSY</name>